<accession>A9AFC7</accession>
<reference key="1">
    <citation type="submission" date="2007-10" db="EMBL/GenBank/DDBJ databases">
        <title>Complete sequence of chromosome 1 of Burkholderia multivorans ATCC 17616.</title>
        <authorList>
            <person name="Copeland A."/>
            <person name="Lucas S."/>
            <person name="Lapidus A."/>
            <person name="Barry K."/>
            <person name="Glavina del Rio T."/>
            <person name="Dalin E."/>
            <person name="Tice H."/>
            <person name="Pitluck S."/>
            <person name="Chain P."/>
            <person name="Malfatti S."/>
            <person name="Shin M."/>
            <person name="Vergez L."/>
            <person name="Schmutz J."/>
            <person name="Larimer F."/>
            <person name="Land M."/>
            <person name="Hauser L."/>
            <person name="Kyrpides N."/>
            <person name="Kim E."/>
            <person name="Tiedje J."/>
            <person name="Richardson P."/>
        </authorList>
    </citation>
    <scope>NUCLEOTIDE SEQUENCE [LARGE SCALE GENOMIC DNA]</scope>
    <source>
        <strain>ATCC 17616 / 249</strain>
    </source>
</reference>
<reference key="2">
    <citation type="submission" date="2007-04" db="EMBL/GenBank/DDBJ databases">
        <title>Complete genome sequence of Burkholderia multivorans ATCC 17616.</title>
        <authorList>
            <person name="Ohtsubo Y."/>
            <person name="Yamashita A."/>
            <person name="Kurokawa K."/>
            <person name="Takami H."/>
            <person name="Yuhara S."/>
            <person name="Nishiyama E."/>
            <person name="Endo R."/>
            <person name="Miyazaki R."/>
            <person name="Ono A."/>
            <person name="Yano K."/>
            <person name="Ito M."/>
            <person name="Sota M."/>
            <person name="Yuji N."/>
            <person name="Hattori M."/>
            <person name="Tsuda M."/>
        </authorList>
    </citation>
    <scope>NUCLEOTIDE SEQUENCE [LARGE SCALE GENOMIC DNA]</scope>
    <source>
        <strain>ATCC 17616 / 249</strain>
    </source>
</reference>
<evidence type="ECO:0000255" key="1">
    <source>
        <dbReference type="HAMAP-Rule" id="MF_00044"/>
    </source>
</evidence>
<gene>
    <name evidence="1" type="primary">aspS</name>
    <name type="ordered locus">Bmul_0574</name>
    <name type="ordered locus">BMULJ_02687</name>
</gene>
<comment type="function">
    <text evidence="1">Aspartyl-tRNA synthetase with relaxed tRNA specificity since it is able to aspartylate not only its cognate tRNA(Asp) but also tRNA(Asn). Reaction proceeds in two steps: L-aspartate is first activated by ATP to form Asp-AMP and then transferred to the acceptor end of tRNA(Asp/Asn).</text>
</comment>
<comment type="catalytic activity">
    <reaction evidence="1">
        <text>tRNA(Asx) + L-aspartate + ATP = L-aspartyl-tRNA(Asx) + AMP + diphosphate</text>
        <dbReference type="Rhea" id="RHEA:18349"/>
        <dbReference type="Rhea" id="RHEA-COMP:9710"/>
        <dbReference type="Rhea" id="RHEA-COMP:9711"/>
        <dbReference type="ChEBI" id="CHEBI:29991"/>
        <dbReference type="ChEBI" id="CHEBI:30616"/>
        <dbReference type="ChEBI" id="CHEBI:33019"/>
        <dbReference type="ChEBI" id="CHEBI:78442"/>
        <dbReference type="ChEBI" id="CHEBI:78516"/>
        <dbReference type="ChEBI" id="CHEBI:456215"/>
        <dbReference type="EC" id="6.1.1.23"/>
    </reaction>
</comment>
<comment type="subunit">
    <text evidence="1">Homodimer.</text>
</comment>
<comment type="subcellular location">
    <subcellularLocation>
        <location evidence="1">Cytoplasm</location>
    </subcellularLocation>
</comment>
<comment type="similarity">
    <text evidence="1">Belongs to the class-II aminoacyl-tRNA synthetase family. Type 1 subfamily.</text>
</comment>
<dbReference type="EC" id="6.1.1.23" evidence="1"/>
<dbReference type="EMBL" id="CP000868">
    <property type="protein sequence ID" value="ABX14269.1"/>
    <property type="molecule type" value="Genomic_DNA"/>
</dbReference>
<dbReference type="EMBL" id="AP009385">
    <property type="protein sequence ID" value="BAG44577.1"/>
    <property type="molecule type" value="Genomic_DNA"/>
</dbReference>
<dbReference type="RefSeq" id="WP_012212730.1">
    <property type="nucleotide sequence ID" value="NC_010084.1"/>
</dbReference>
<dbReference type="SMR" id="A9AFC7"/>
<dbReference type="STRING" id="395019.BMULJ_02687"/>
<dbReference type="KEGG" id="bmj:BMULJ_02687"/>
<dbReference type="KEGG" id="bmu:Bmul_0574"/>
<dbReference type="eggNOG" id="COG0173">
    <property type="taxonomic scope" value="Bacteria"/>
</dbReference>
<dbReference type="HOGENOM" id="CLU_014330_3_2_4"/>
<dbReference type="Proteomes" id="UP000008815">
    <property type="component" value="Chromosome 1"/>
</dbReference>
<dbReference type="GO" id="GO:0005737">
    <property type="term" value="C:cytoplasm"/>
    <property type="evidence" value="ECO:0007669"/>
    <property type="project" value="UniProtKB-SubCell"/>
</dbReference>
<dbReference type="GO" id="GO:0004815">
    <property type="term" value="F:aspartate-tRNA ligase activity"/>
    <property type="evidence" value="ECO:0007669"/>
    <property type="project" value="UniProtKB-UniRule"/>
</dbReference>
<dbReference type="GO" id="GO:0050560">
    <property type="term" value="F:aspartate-tRNA(Asn) ligase activity"/>
    <property type="evidence" value="ECO:0007669"/>
    <property type="project" value="UniProtKB-EC"/>
</dbReference>
<dbReference type="GO" id="GO:0005524">
    <property type="term" value="F:ATP binding"/>
    <property type="evidence" value="ECO:0007669"/>
    <property type="project" value="UniProtKB-UniRule"/>
</dbReference>
<dbReference type="GO" id="GO:0003676">
    <property type="term" value="F:nucleic acid binding"/>
    <property type="evidence" value="ECO:0007669"/>
    <property type="project" value="InterPro"/>
</dbReference>
<dbReference type="GO" id="GO:0006422">
    <property type="term" value="P:aspartyl-tRNA aminoacylation"/>
    <property type="evidence" value="ECO:0007669"/>
    <property type="project" value="UniProtKB-UniRule"/>
</dbReference>
<dbReference type="CDD" id="cd00777">
    <property type="entry name" value="AspRS_core"/>
    <property type="match status" value="1"/>
</dbReference>
<dbReference type="CDD" id="cd04317">
    <property type="entry name" value="EcAspRS_like_N"/>
    <property type="match status" value="1"/>
</dbReference>
<dbReference type="Gene3D" id="3.30.930.10">
    <property type="entry name" value="Bira Bifunctional Protein, Domain 2"/>
    <property type="match status" value="1"/>
</dbReference>
<dbReference type="Gene3D" id="3.30.1360.30">
    <property type="entry name" value="GAD-like domain"/>
    <property type="match status" value="1"/>
</dbReference>
<dbReference type="Gene3D" id="2.40.50.140">
    <property type="entry name" value="Nucleic acid-binding proteins"/>
    <property type="match status" value="1"/>
</dbReference>
<dbReference type="HAMAP" id="MF_00044">
    <property type="entry name" value="Asp_tRNA_synth_type1"/>
    <property type="match status" value="1"/>
</dbReference>
<dbReference type="InterPro" id="IPR004364">
    <property type="entry name" value="Aa-tRNA-synt_II"/>
</dbReference>
<dbReference type="InterPro" id="IPR006195">
    <property type="entry name" value="aa-tRNA-synth_II"/>
</dbReference>
<dbReference type="InterPro" id="IPR045864">
    <property type="entry name" value="aa-tRNA-synth_II/BPL/LPL"/>
</dbReference>
<dbReference type="InterPro" id="IPR004524">
    <property type="entry name" value="Asp-tRNA-ligase_1"/>
</dbReference>
<dbReference type="InterPro" id="IPR047089">
    <property type="entry name" value="Asp-tRNA-ligase_1_N"/>
</dbReference>
<dbReference type="InterPro" id="IPR002312">
    <property type="entry name" value="Asp/Asn-tRNA-synth_IIb"/>
</dbReference>
<dbReference type="InterPro" id="IPR047090">
    <property type="entry name" value="AspRS_core"/>
</dbReference>
<dbReference type="InterPro" id="IPR004115">
    <property type="entry name" value="GAD-like_sf"/>
</dbReference>
<dbReference type="InterPro" id="IPR029351">
    <property type="entry name" value="GAD_dom"/>
</dbReference>
<dbReference type="InterPro" id="IPR012340">
    <property type="entry name" value="NA-bd_OB-fold"/>
</dbReference>
<dbReference type="InterPro" id="IPR004365">
    <property type="entry name" value="NA-bd_OB_tRNA"/>
</dbReference>
<dbReference type="NCBIfam" id="TIGR00459">
    <property type="entry name" value="aspS_bact"/>
    <property type="match status" value="1"/>
</dbReference>
<dbReference type="NCBIfam" id="NF001750">
    <property type="entry name" value="PRK00476.1"/>
    <property type="match status" value="1"/>
</dbReference>
<dbReference type="PANTHER" id="PTHR22594:SF5">
    <property type="entry name" value="ASPARTATE--TRNA LIGASE, MITOCHONDRIAL"/>
    <property type="match status" value="1"/>
</dbReference>
<dbReference type="PANTHER" id="PTHR22594">
    <property type="entry name" value="ASPARTYL/LYSYL-TRNA SYNTHETASE"/>
    <property type="match status" value="1"/>
</dbReference>
<dbReference type="Pfam" id="PF02938">
    <property type="entry name" value="GAD"/>
    <property type="match status" value="1"/>
</dbReference>
<dbReference type="Pfam" id="PF00152">
    <property type="entry name" value="tRNA-synt_2"/>
    <property type="match status" value="1"/>
</dbReference>
<dbReference type="Pfam" id="PF01336">
    <property type="entry name" value="tRNA_anti-codon"/>
    <property type="match status" value="1"/>
</dbReference>
<dbReference type="PRINTS" id="PR01042">
    <property type="entry name" value="TRNASYNTHASP"/>
</dbReference>
<dbReference type="SUPFAM" id="SSF55681">
    <property type="entry name" value="Class II aaRS and biotin synthetases"/>
    <property type="match status" value="1"/>
</dbReference>
<dbReference type="SUPFAM" id="SSF55261">
    <property type="entry name" value="GAD domain-like"/>
    <property type="match status" value="1"/>
</dbReference>
<dbReference type="SUPFAM" id="SSF50249">
    <property type="entry name" value="Nucleic acid-binding proteins"/>
    <property type="match status" value="1"/>
</dbReference>
<dbReference type="PROSITE" id="PS50862">
    <property type="entry name" value="AA_TRNA_LIGASE_II"/>
    <property type="match status" value="1"/>
</dbReference>
<protein>
    <recommendedName>
        <fullName evidence="1">Aspartate--tRNA(Asp/Asn) ligase</fullName>
        <ecNumber evidence="1">6.1.1.23</ecNumber>
    </recommendedName>
    <alternativeName>
        <fullName evidence="1">Aspartyl-tRNA synthetase</fullName>
        <shortName evidence="1">AspRS</shortName>
    </alternativeName>
    <alternativeName>
        <fullName evidence="1">Non-discriminating aspartyl-tRNA synthetase</fullName>
        <shortName evidence="1">ND-AspRS</shortName>
    </alternativeName>
</protein>
<keyword id="KW-0030">Aminoacyl-tRNA synthetase</keyword>
<keyword id="KW-0067">ATP-binding</keyword>
<keyword id="KW-0963">Cytoplasm</keyword>
<keyword id="KW-0436">Ligase</keyword>
<keyword id="KW-0547">Nucleotide-binding</keyword>
<keyword id="KW-0648">Protein biosynthesis</keyword>
<keyword id="KW-1185">Reference proteome</keyword>
<organism>
    <name type="scientific">Burkholderia multivorans (strain ATCC 17616 / 249)</name>
    <dbReference type="NCBI Taxonomy" id="395019"/>
    <lineage>
        <taxon>Bacteria</taxon>
        <taxon>Pseudomonadati</taxon>
        <taxon>Pseudomonadota</taxon>
        <taxon>Betaproteobacteria</taxon>
        <taxon>Burkholderiales</taxon>
        <taxon>Burkholderiaceae</taxon>
        <taxon>Burkholderia</taxon>
        <taxon>Burkholderia cepacia complex</taxon>
    </lineage>
</organism>
<proteinExistence type="inferred from homology"/>
<sequence length="600" mass="67672">MSMRTEYCGLVTEHLLGQTVSLCGWVQRRRDHGGVIFIDLRDREGLVQVVCDPDRAEMFATAEGVRNEFCVQVKGLVRNRPEGTVNAGLKSGKIEVLCHELNVLNPSITPPFQLDDDNLSETTRLTHRVLDLRRPQMQHNLRLRYRVAIEARKYLDEQGFIDIETPMLTKSTPEGARDYLVPSRVNAGQFFALPQSPQLFKQLLMVANFDRYYQITKCFRDEDLRADRQPEFTQIDCETSFLGEQEIRDLFEDMIRHIFKTTINVELDAKFPVMPYSEAMARFGSDKPDLRVKLEFTELTDAMKDVDFKVFSTPANAKDGRVAALRVPKGAELSRGDIDGYTEFVRIYGAKGLAWIKVNEKAKGRDGLQSPIVKNLHDASIAAILERTGAEDGDIIFFAADRAKVVNDSLGALRLKIGHSEFGKANGLVEAGWKPLWVVDFPMFEYDDEDARYVAAHHPFTSPKDEHLEYLESDPGRCLAKAYDMVLNGWEIGGGSVRIHREDVQSKVFRALKIGAEEAQAKFGFLLDALQYGAPPHGGIAFGLDRIVTMMAGADSIRDVIAFPKTQRAQDLLTQAPSPVDERQLRELHIRLRQPEQPAS</sequence>
<feature type="chain" id="PRO_1000090970" description="Aspartate--tRNA(Asp/Asn) ligase">
    <location>
        <begin position="1"/>
        <end position="600"/>
    </location>
</feature>
<feature type="region of interest" description="Aspartate" evidence="1">
    <location>
        <begin position="198"/>
        <end position="201"/>
    </location>
</feature>
<feature type="binding site" evidence="1">
    <location>
        <position position="174"/>
    </location>
    <ligand>
        <name>L-aspartate</name>
        <dbReference type="ChEBI" id="CHEBI:29991"/>
    </ligand>
</feature>
<feature type="binding site" evidence="1">
    <location>
        <begin position="220"/>
        <end position="222"/>
    </location>
    <ligand>
        <name>ATP</name>
        <dbReference type="ChEBI" id="CHEBI:30616"/>
    </ligand>
</feature>
<feature type="binding site" evidence="1">
    <location>
        <position position="220"/>
    </location>
    <ligand>
        <name>L-aspartate</name>
        <dbReference type="ChEBI" id="CHEBI:29991"/>
    </ligand>
</feature>
<feature type="binding site" evidence="1">
    <location>
        <position position="229"/>
    </location>
    <ligand>
        <name>ATP</name>
        <dbReference type="ChEBI" id="CHEBI:30616"/>
    </ligand>
</feature>
<feature type="binding site" evidence="1">
    <location>
        <position position="457"/>
    </location>
    <ligand>
        <name>L-aspartate</name>
        <dbReference type="ChEBI" id="CHEBI:29991"/>
    </ligand>
</feature>
<feature type="binding site" evidence="1">
    <location>
        <position position="491"/>
    </location>
    <ligand>
        <name>ATP</name>
        <dbReference type="ChEBI" id="CHEBI:30616"/>
    </ligand>
</feature>
<feature type="binding site" evidence="1">
    <location>
        <position position="498"/>
    </location>
    <ligand>
        <name>L-aspartate</name>
        <dbReference type="ChEBI" id="CHEBI:29991"/>
    </ligand>
</feature>
<feature type="binding site" evidence="1">
    <location>
        <begin position="543"/>
        <end position="546"/>
    </location>
    <ligand>
        <name>ATP</name>
        <dbReference type="ChEBI" id="CHEBI:30616"/>
    </ligand>
</feature>
<feature type="site" description="Important for tRNA non-discrimination" evidence="1">
    <location>
        <position position="32"/>
    </location>
</feature>
<feature type="site" description="Important for tRNA non-discrimination" evidence="1">
    <location>
        <position position="83"/>
    </location>
</feature>
<name>SYDND_BURM1</name>